<proteinExistence type="evidence at protein level"/>
<evidence type="ECO:0000269" key="1">
    <source>
    </source>
</evidence>
<evidence type="ECO:0000303" key="2">
    <source ref="4"/>
</evidence>
<evidence type="ECO:0000305" key="3"/>
<evidence type="ECO:0007744" key="4">
    <source>
    </source>
</evidence>
<evidence type="ECO:0007829" key="5">
    <source>
        <dbReference type="PDB" id="1ZXU"/>
    </source>
</evidence>
<gene>
    <name type="ordered locus">At5g01750</name>
    <name type="ORF">T20L15.20</name>
</gene>
<feature type="chain" id="PRO_0000238457" description="Protein LURP-one-related 15">
    <location>
        <begin position="1"/>
        <end position="217"/>
    </location>
</feature>
<feature type="modified residue" description="N-acetylmethionine" evidence="4">
    <location>
        <position position="1"/>
    </location>
</feature>
<feature type="splice variant" id="VSP_018603" description="In isoform 2." evidence="2">
    <original>MHRK</original>
    <variation>VYYL</variation>
    <location>
        <begin position="171"/>
        <end position="174"/>
    </location>
</feature>
<feature type="splice variant" id="VSP_018604" description="In isoform 2." evidence="2">
    <location>
        <begin position="175"/>
        <end position="217"/>
    </location>
</feature>
<feature type="sequence conflict" description="In Ref. 4; AAM62599." evidence="3" ref="4">
    <original>K</original>
    <variation>R</variation>
    <location>
        <position position="31"/>
    </location>
</feature>
<feature type="sequence conflict" description="In Ref. 4; AAM62599." evidence="3" ref="4">
    <original>D</original>
    <variation>E</variation>
    <location>
        <position position="111"/>
    </location>
</feature>
<feature type="helix" evidence="5">
    <location>
        <begin position="30"/>
        <end position="32"/>
    </location>
</feature>
<feature type="strand" evidence="5">
    <location>
        <begin position="38"/>
        <end position="43"/>
    </location>
</feature>
<feature type="strand" evidence="5">
    <location>
        <begin position="54"/>
        <end position="58"/>
    </location>
</feature>
<feature type="strand" evidence="5">
    <location>
        <begin position="63"/>
        <end position="68"/>
    </location>
</feature>
<feature type="strand" evidence="5">
    <location>
        <begin position="76"/>
        <end position="81"/>
    </location>
</feature>
<feature type="strand" evidence="5">
    <location>
        <begin position="87"/>
        <end position="92"/>
    </location>
</feature>
<feature type="strand" evidence="5">
    <location>
        <begin position="101"/>
        <end position="106"/>
    </location>
</feature>
<feature type="helix" evidence="5">
    <location>
        <begin position="112"/>
        <end position="114"/>
    </location>
</feature>
<feature type="strand" evidence="5">
    <location>
        <begin position="115"/>
        <end position="120"/>
    </location>
</feature>
<feature type="strand" evidence="5">
    <location>
        <begin position="131"/>
        <end position="135"/>
    </location>
</feature>
<feature type="strand" evidence="5">
    <location>
        <begin position="145"/>
        <end position="150"/>
    </location>
</feature>
<feature type="turn" evidence="5">
    <location>
        <begin position="152"/>
        <end position="155"/>
    </location>
</feature>
<feature type="strand" evidence="5">
    <location>
        <begin position="158"/>
        <end position="161"/>
    </location>
</feature>
<feature type="turn" evidence="5">
    <location>
        <begin position="162"/>
        <end position="164"/>
    </location>
</feature>
<feature type="strand" evidence="5">
    <location>
        <begin position="167"/>
        <end position="173"/>
    </location>
</feature>
<feature type="strand" evidence="5">
    <location>
        <begin position="186"/>
        <end position="191"/>
    </location>
</feature>
<feature type="helix" evidence="5">
    <location>
        <begin position="197"/>
        <end position="211"/>
    </location>
</feature>
<organism>
    <name type="scientific">Arabidopsis thaliana</name>
    <name type="common">Mouse-ear cress</name>
    <dbReference type="NCBI Taxonomy" id="3702"/>
    <lineage>
        <taxon>Eukaryota</taxon>
        <taxon>Viridiplantae</taxon>
        <taxon>Streptophyta</taxon>
        <taxon>Embryophyta</taxon>
        <taxon>Tracheophyta</taxon>
        <taxon>Spermatophyta</taxon>
        <taxon>Magnoliopsida</taxon>
        <taxon>eudicotyledons</taxon>
        <taxon>Gunneridae</taxon>
        <taxon>Pentapetalae</taxon>
        <taxon>rosids</taxon>
        <taxon>malvids</taxon>
        <taxon>Brassicales</taxon>
        <taxon>Brassicaceae</taxon>
        <taxon>Camelineae</taxon>
        <taxon>Arabidopsis</taxon>
    </lineage>
</organism>
<sequence length="217" mass="24295">MEQPYVYAYPQGSGPSGAPTPQAGGVVVDPKYCAPYPIDMAIVRKMMSLTDGNFVITDVNGNLLFKVKEPVFGLHDKRVLLDGSGTPVVTLREKMVSMHDRWQVFRGGSTDQRDLLYTVKRSSMLQLKTKLDVFLGHNKDEKRCDFRVKGSWLERSCVVYAGESDAIVAQMHRKHTVQSVFLGKDNFSVTVYPNVDYAFIASLVVILDDVNREDRAA</sequence>
<dbReference type="EMBL" id="AL162351">
    <property type="protein sequence ID" value="CAB82745.1"/>
    <property type="molecule type" value="Genomic_DNA"/>
</dbReference>
<dbReference type="EMBL" id="CP002688">
    <property type="protein sequence ID" value="AED90386.1"/>
    <property type="molecule type" value="Genomic_DNA"/>
</dbReference>
<dbReference type="EMBL" id="CP002688">
    <property type="protein sequence ID" value="AED90387.1"/>
    <property type="molecule type" value="Genomic_DNA"/>
</dbReference>
<dbReference type="EMBL" id="AF372877">
    <property type="protein sequence ID" value="AAK49593.1"/>
    <property type="molecule type" value="mRNA"/>
</dbReference>
<dbReference type="EMBL" id="AY142034">
    <property type="protein sequence ID" value="AAM98298.1"/>
    <property type="molecule type" value="mRNA"/>
</dbReference>
<dbReference type="EMBL" id="AY085369">
    <property type="protein sequence ID" value="AAM62599.1"/>
    <property type="molecule type" value="mRNA"/>
</dbReference>
<dbReference type="PIR" id="T48196">
    <property type="entry name" value="T48196"/>
</dbReference>
<dbReference type="RefSeq" id="NP_568095.1">
    <molecule id="Q9LZX1-2"/>
    <property type="nucleotide sequence ID" value="NM_120253.4"/>
</dbReference>
<dbReference type="RefSeq" id="NP_850751.1">
    <molecule id="Q9LZX1-1"/>
    <property type="nucleotide sequence ID" value="NM_180420.2"/>
</dbReference>
<dbReference type="PDB" id="1ZXU">
    <property type="method" value="X-ray"/>
    <property type="resolution" value="1.70 A"/>
    <property type="chains" value="A=1-217"/>
</dbReference>
<dbReference type="PDB" id="2Q4M">
    <property type="method" value="X-ray"/>
    <property type="resolution" value="1.70 A"/>
    <property type="chains" value="A=1-217"/>
</dbReference>
<dbReference type="PDBsum" id="1ZXU"/>
<dbReference type="PDBsum" id="2Q4M"/>
<dbReference type="SMR" id="Q9LZX1"/>
<dbReference type="BioGRID" id="16960">
    <property type="interactions" value="5"/>
</dbReference>
<dbReference type="FunCoup" id="Q9LZX1">
    <property type="interactions" value="41"/>
</dbReference>
<dbReference type="IntAct" id="Q9LZX1">
    <property type="interactions" value="4"/>
</dbReference>
<dbReference type="STRING" id="3702.Q9LZX1"/>
<dbReference type="iPTMnet" id="Q9LZX1"/>
<dbReference type="PaxDb" id="3702-AT5G01750.2"/>
<dbReference type="ProteomicsDB" id="238665">
    <molecule id="Q9LZX1-1"/>
</dbReference>
<dbReference type="DNASU" id="831684"/>
<dbReference type="EnsemblPlants" id="AT5G01750.1">
    <molecule id="Q9LZX1-2"/>
    <property type="protein sequence ID" value="AT5G01750.1"/>
    <property type="gene ID" value="AT5G01750"/>
</dbReference>
<dbReference type="EnsemblPlants" id="AT5G01750.2">
    <molecule id="Q9LZX1-1"/>
    <property type="protein sequence ID" value="AT5G01750.2"/>
    <property type="gene ID" value="AT5G01750"/>
</dbReference>
<dbReference type="GeneID" id="831684"/>
<dbReference type="Gramene" id="AT5G01750.1">
    <molecule id="Q9LZX1-2"/>
    <property type="protein sequence ID" value="AT5G01750.1"/>
    <property type="gene ID" value="AT5G01750"/>
</dbReference>
<dbReference type="Gramene" id="AT5G01750.2">
    <molecule id="Q9LZX1-1"/>
    <property type="protein sequence ID" value="AT5G01750.2"/>
    <property type="gene ID" value="AT5G01750"/>
</dbReference>
<dbReference type="KEGG" id="ath:AT5G01750"/>
<dbReference type="Araport" id="AT5G01750"/>
<dbReference type="TAIR" id="AT5G01750"/>
<dbReference type="eggNOG" id="ENOG502QUU9">
    <property type="taxonomic scope" value="Eukaryota"/>
</dbReference>
<dbReference type="HOGENOM" id="CLU_063146_5_1_1"/>
<dbReference type="InParanoid" id="Q9LZX1"/>
<dbReference type="OMA" id="FCAPRTV"/>
<dbReference type="PhylomeDB" id="Q9LZX1"/>
<dbReference type="CD-CODE" id="4299E36E">
    <property type="entry name" value="Nucleolus"/>
</dbReference>
<dbReference type="EvolutionaryTrace" id="Q9LZX1"/>
<dbReference type="PRO" id="PR:Q9LZX1"/>
<dbReference type="Proteomes" id="UP000006548">
    <property type="component" value="Chromosome 5"/>
</dbReference>
<dbReference type="ExpressionAtlas" id="Q9LZX1">
    <property type="expression patterns" value="baseline and differential"/>
</dbReference>
<dbReference type="GO" id="GO:0005829">
    <property type="term" value="C:cytosol"/>
    <property type="evidence" value="ECO:0007005"/>
    <property type="project" value="TAIR"/>
</dbReference>
<dbReference type="GO" id="GO:0005886">
    <property type="term" value="C:plasma membrane"/>
    <property type="evidence" value="ECO:0007005"/>
    <property type="project" value="TAIR"/>
</dbReference>
<dbReference type="GO" id="GO:0019904">
    <property type="term" value="F:protein domain specific binding"/>
    <property type="evidence" value="ECO:0000353"/>
    <property type="project" value="CAFA"/>
</dbReference>
<dbReference type="FunFam" id="2.40.160.200:FF:000001">
    <property type="entry name" value="LURP-one-like protein (DUF567)"/>
    <property type="match status" value="1"/>
</dbReference>
<dbReference type="Gene3D" id="2.40.160.200">
    <property type="entry name" value="LURP1-related"/>
    <property type="match status" value="1"/>
</dbReference>
<dbReference type="InterPro" id="IPR007612">
    <property type="entry name" value="LOR"/>
</dbReference>
<dbReference type="InterPro" id="IPR038595">
    <property type="entry name" value="LOR_sf"/>
</dbReference>
<dbReference type="InterPro" id="IPR025659">
    <property type="entry name" value="Tubby-like_C"/>
</dbReference>
<dbReference type="PANTHER" id="PTHR31087">
    <property type="match status" value="1"/>
</dbReference>
<dbReference type="PANTHER" id="PTHR31087:SF160">
    <property type="entry name" value="PROTEIN LURP-ONE-RELATED 1-RELATED"/>
    <property type="match status" value="1"/>
</dbReference>
<dbReference type="Pfam" id="PF04525">
    <property type="entry name" value="LOR"/>
    <property type="match status" value="1"/>
</dbReference>
<dbReference type="SUPFAM" id="SSF54518">
    <property type="entry name" value="Tubby C-terminal domain-like"/>
    <property type="match status" value="1"/>
</dbReference>
<accession>Q9LZX1</accession>
<accession>Q8LEK9</accession>
<protein>
    <recommendedName>
        <fullName>Protein LURP-one-related 15</fullName>
    </recommendedName>
</protein>
<comment type="function">
    <text evidence="1">Might be related to the phospholipid scramblase and tubby-like superfamily of membrane tethered transcription factors.</text>
</comment>
<comment type="alternative products">
    <event type="alternative splicing"/>
    <isoform>
        <id>Q9LZX1-1</id>
        <name>1</name>
        <sequence type="displayed"/>
    </isoform>
    <isoform>
        <id>Q9LZX1-2</id>
        <name>2</name>
        <sequence type="described" ref="VSP_018603 VSP_018604"/>
    </isoform>
</comment>
<comment type="similarity">
    <text evidence="3">Belongs to the LOR family.</text>
</comment>
<keyword id="KW-0002">3D-structure</keyword>
<keyword id="KW-0007">Acetylation</keyword>
<keyword id="KW-0025">Alternative splicing</keyword>
<keyword id="KW-1185">Reference proteome</keyword>
<reference key="1">
    <citation type="journal article" date="2000" name="Nature">
        <title>Sequence and analysis of chromosome 5 of the plant Arabidopsis thaliana.</title>
        <authorList>
            <person name="Tabata S."/>
            <person name="Kaneko T."/>
            <person name="Nakamura Y."/>
            <person name="Kotani H."/>
            <person name="Kato T."/>
            <person name="Asamizu E."/>
            <person name="Miyajima N."/>
            <person name="Sasamoto S."/>
            <person name="Kimura T."/>
            <person name="Hosouchi T."/>
            <person name="Kawashima K."/>
            <person name="Kohara M."/>
            <person name="Matsumoto M."/>
            <person name="Matsuno A."/>
            <person name="Muraki A."/>
            <person name="Nakayama S."/>
            <person name="Nakazaki N."/>
            <person name="Naruo K."/>
            <person name="Okumura S."/>
            <person name="Shinpo S."/>
            <person name="Takeuchi C."/>
            <person name="Wada T."/>
            <person name="Watanabe A."/>
            <person name="Yamada M."/>
            <person name="Yasuda M."/>
            <person name="Sato S."/>
            <person name="de la Bastide M."/>
            <person name="Huang E."/>
            <person name="Spiegel L."/>
            <person name="Gnoj L."/>
            <person name="O'Shaughnessy A."/>
            <person name="Preston R."/>
            <person name="Habermann K."/>
            <person name="Murray J."/>
            <person name="Johnson D."/>
            <person name="Rohlfing T."/>
            <person name="Nelson J."/>
            <person name="Stoneking T."/>
            <person name="Pepin K."/>
            <person name="Spieth J."/>
            <person name="Sekhon M."/>
            <person name="Armstrong J."/>
            <person name="Becker M."/>
            <person name="Belter E."/>
            <person name="Cordum H."/>
            <person name="Cordes M."/>
            <person name="Courtney L."/>
            <person name="Courtney W."/>
            <person name="Dante M."/>
            <person name="Du H."/>
            <person name="Edwards J."/>
            <person name="Fryman J."/>
            <person name="Haakensen B."/>
            <person name="Lamar E."/>
            <person name="Latreille P."/>
            <person name="Leonard S."/>
            <person name="Meyer R."/>
            <person name="Mulvaney E."/>
            <person name="Ozersky P."/>
            <person name="Riley A."/>
            <person name="Strowmatt C."/>
            <person name="Wagner-McPherson C."/>
            <person name="Wollam A."/>
            <person name="Yoakum M."/>
            <person name="Bell M."/>
            <person name="Dedhia N."/>
            <person name="Parnell L."/>
            <person name="Shah R."/>
            <person name="Rodriguez M."/>
            <person name="Hoon See L."/>
            <person name="Vil D."/>
            <person name="Baker J."/>
            <person name="Kirchoff K."/>
            <person name="Toth K."/>
            <person name="King L."/>
            <person name="Bahret A."/>
            <person name="Miller B."/>
            <person name="Marra M.A."/>
            <person name="Martienssen R."/>
            <person name="McCombie W.R."/>
            <person name="Wilson R.K."/>
            <person name="Murphy G."/>
            <person name="Bancroft I."/>
            <person name="Volckaert G."/>
            <person name="Wambutt R."/>
            <person name="Duesterhoeft A."/>
            <person name="Stiekema W."/>
            <person name="Pohl T."/>
            <person name="Entian K.-D."/>
            <person name="Terryn N."/>
            <person name="Hartley N."/>
            <person name="Bent E."/>
            <person name="Johnson S."/>
            <person name="Langham S.-A."/>
            <person name="McCullagh B."/>
            <person name="Robben J."/>
            <person name="Grymonprez B."/>
            <person name="Zimmermann W."/>
            <person name="Ramsperger U."/>
            <person name="Wedler H."/>
            <person name="Balke K."/>
            <person name="Wedler E."/>
            <person name="Peters S."/>
            <person name="van Staveren M."/>
            <person name="Dirkse W."/>
            <person name="Mooijman P."/>
            <person name="Klein Lankhorst R."/>
            <person name="Weitzenegger T."/>
            <person name="Bothe G."/>
            <person name="Rose M."/>
            <person name="Hauf J."/>
            <person name="Berneiser S."/>
            <person name="Hempel S."/>
            <person name="Feldpausch M."/>
            <person name="Lamberth S."/>
            <person name="Villarroel R."/>
            <person name="Gielen J."/>
            <person name="Ardiles W."/>
            <person name="Bents O."/>
            <person name="Lemcke K."/>
            <person name="Kolesov G."/>
            <person name="Mayer K.F.X."/>
            <person name="Rudd S."/>
            <person name="Schoof H."/>
            <person name="Schueller C."/>
            <person name="Zaccaria P."/>
            <person name="Mewes H.-W."/>
            <person name="Bevan M."/>
            <person name="Fransz P.F."/>
        </authorList>
    </citation>
    <scope>NUCLEOTIDE SEQUENCE [LARGE SCALE GENOMIC DNA]</scope>
    <source>
        <strain>cv. Columbia</strain>
    </source>
</reference>
<reference key="2">
    <citation type="journal article" date="2017" name="Plant J.">
        <title>Araport11: a complete reannotation of the Arabidopsis thaliana reference genome.</title>
        <authorList>
            <person name="Cheng C.Y."/>
            <person name="Krishnakumar V."/>
            <person name="Chan A.P."/>
            <person name="Thibaud-Nissen F."/>
            <person name="Schobel S."/>
            <person name="Town C.D."/>
        </authorList>
    </citation>
    <scope>GENOME REANNOTATION</scope>
    <source>
        <strain>cv. Columbia</strain>
    </source>
</reference>
<reference key="3">
    <citation type="journal article" date="2003" name="Science">
        <title>Empirical analysis of transcriptional activity in the Arabidopsis genome.</title>
        <authorList>
            <person name="Yamada K."/>
            <person name="Lim J."/>
            <person name="Dale J.M."/>
            <person name="Chen H."/>
            <person name="Shinn P."/>
            <person name="Palm C.J."/>
            <person name="Southwick A.M."/>
            <person name="Wu H.C."/>
            <person name="Kim C.J."/>
            <person name="Nguyen M."/>
            <person name="Pham P.K."/>
            <person name="Cheuk R.F."/>
            <person name="Karlin-Newmann G."/>
            <person name="Liu S.X."/>
            <person name="Lam B."/>
            <person name="Sakano H."/>
            <person name="Wu T."/>
            <person name="Yu G."/>
            <person name="Miranda M."/>
            <person name="Quach H.L."/>
            <person name="Tripp M."/>
            <person name="Chang C.H."/>
            <person name="Lee J.M."/>
            <person name="Toriumi M.J."/>
            <person name="Chan M.M."/>
            <person name="Tang C.C."/>
            <person name="Onodera C.S."/>
            <person name="Deng J.M."/>
            <person name="Akiyama K."/>
            <person name="Ansari Y."/>
            <person name="Arakawa T."/>
            <person name="Banh J."/>
            <person name="Banno F."/>
            <person name="Bowser L."/>
            <person name="Brooks S.Y."/>
            <person name="Carninci P."/>
            <person name="Chao Q."/>
            <person name="Choy N."/>
            <person name="Enju A."/>
            <person name="Goldsmith A.D."/>
            <person name="Gurjal M."/>
            <person name="Hansen N.F."/>
            <person name="Hayashizaki Y."/>
            <person name="Johnson-Hopson C."/>
            <person name="Hsuan V.W."/>
            <person name="Iida K."/>
            <person name="Karnes M."/>
            <person name="Khan S."/>
            <person name="Koesema E."/>
            <person name="Ishida J."/>
            <person name="Jiang P.X."/>
            <person name="Jones T."/>
            <person name="Kawai J."/>
            <person name="Kamiya A."/>
            <person name="Meyers C."/>
            <person name="Nakajima M."/>
            <person name="Narusaka M."/>
            <person name="Seki M."/>
            <person name="Sakurai T."/>
            <person name="Satou M."/>
            <person name="Tamse R."/>
            <person name="Vaysberg M."/>
            <person name="Wallender E.K."/>
            <person name="Wong C."/>
            <person name="Yamamura Y."/>
            <person name="Yuan S."/>
            <person name="Shinozaki K."/>
            <person name="Davis R.W."/>
            <person name="Theologis A."/>
            <person name="Ecker J.R."/>
        </authorList>
    </citation>
    <scope>NUCLEOTIDE SEQUENCE [LARGE SCALE MRNA] (ISOFORM 1)</scope>
    <source>
        <strain>cv. Columbia</strain>
    </source>
</reference>
<reference key="4">
    <citation type="submission" date="2002-03" db="EMBL/GenBank/DDBJ databases">
        <title>Full-length cDNA from Arabidopsis thaliana.</title>
        <authorList>
            <person name="Brover V."/>
            <person name="Troukhan M."/>
            <person name="Alexandrov N."/>
            <person name="Lu Y.-P."/>
            <person name="Flavell R."/>
            <person name="Feldmann K.A."/>
        </authorList>
    </citation>
    <scope>NUCLEOTIDE SEQUENCE [LARGE SCALE MRNA] (ISOFORM 2)</scope>
</reference>
<reference key="5">
    <citation type="journal article" date="2009" name="Bioinformatics">
        <title>Phospholipid scramblases and Tubby-like proteins belong to a new superfamily of membrane tethered transcription factors.</title>
        <authorList>
            <person name="Bateman A."/>
            <person name="Finn R.D."/>
            <person name="Sims P.J."/>
            <person name="Wiedmer T."/>
            <person name="Biegert A."/>
            <person name="Soding J."/>
        </authorList>
    </citation>
    <scope>FUNCTION</scope>
</reference>
<reference key="6">
    <citation type="journal article" date="2012" name="Mol. Cell. Proteomics">
        <title>Comparative large-scale characterisation of plant vs. mammal proteins reveals similar and idiosyncratic N-alpha acetylation features.</title>
        <authorList>
            <person name="Bienvenut W.V."/>
            <person name="Sumpton D."/>
            <person name="Martinez A."/>
            <person name="Lilla S."/>
            <person name="Espagne C."/>
            <person name="Meinnel T."/>
            <person name="Giglione C."/>
        </authorList>
    </citation>
    <scope>ACETYLATION [LARGE SCALE ANALYSIS] AT MET-1</scope>
    <scope>IDENTIFICATION BY MASS SPECTROMETRY [LARGE SCALE ANALYSIS]</scope>
</reference>
<reference key="7">
    <citation type="submission" date="2005-06" db="PDB data bank">
        <title>X-ray structure of protein At5g01750 from Arabidopsis thaliana.</title>
        <authorList>
            <consortium name="Center for eukaryotic structural genomics (CESG)"/>
        </authorList>
    </citation>
    <scope>X-RAY CRYSTALLOGRAPHY (1.7 ANGSTROMS) OF 1-217 (ISOFORM 1)</scope>
</reference>
<name>LOR15_ARATH</name>